<gene>
    <name evidence="1" type="primary">psbE</name>
    <name type="ordered locus">PCC7424_0815</name>
</gene>
<sequence>MSGTTGERPFSDIVTSIRYWVIHSITIPMLFVAGWLFVSTGLAYDVFGTPRPDEYYTQERLELPILKDRYNTDQQIQEFNK</sequence>
<protein>
    <recommendedName>
        <fullName evidence="1">Cytochrome b559 subunit alpha</fullName>
    </recommendedName>
    <alternativeName>
        <fullName evidence="1">PSII reaction center subunit V</fullName>
    </alternativeName>
</protein>
<keyword id="KW-0249">Electron transport</keyword>
<keyword id="KW-0349">Heme</keyword>
<keyword id="KW-0408">Iron</keyword>
<keyword id="KW-0472">Membrane</keyword>
<keyword id="KW-0479">Metal-binding</keyword>
<keyword id="KW-0602">Photosynthesis</keyword>
<keyword id="KW-0604">Photosystem II</keyword>
<keyword id="KW-1185">Reference proteome</keyword>
<keyword id="KW-0793">Thylakoid</keyword>
<keyword id="KW-0812">Transmembrane</keyword>
<keyword id="KW-1133">Transmembrane helix</keyword>
<keyword id="KW-0813">Transport</keyword>
<comment type="function">
    <text evidence="1">This b-type cytochrome is tightly associated with the reaction center of photosystem II (PSII). PSII is a light-driven water:plastoquinone oxidoreductase that uses light energy to abstract electrons from H(2)O, generating O(2) and a proton gradient subsequently used for ATP formation. It consists of a core antenna complex that captures photons, and an electron transfer chain that converts photonic excitation into a charge separation.</text>
</comment>
<comment type="cofactor">
    <cofactor evidence="1">
        <name>heme b</name>
        <dbReference type="ChEBI" id="CHEBI:60344"/>
    </cofactor>
    <text evidence="1">With its partner (PsbF) binds heme. PSII binds additional chlorophylls, carotenoids and specific lipids.</text>
</comment>
<comment type="subunit">
    <text evidence="1">Heterodimer of an alpha subunit and a beta subunit. PSII is composed of 1 copy each of membrane proteins PsbA, PsbB, PsbC, PsbD, PsbE, PsbF, PsbH, PsbI, PsbJ, PsbK, PsbL, PsbM, PsbT, PsbX, PsbY, PsbZ, Psb30/Ycf12, peripheral proteins PsbO, CyanoQ (PsbQ), PsbU, PsbV and a large number of cofactors. It forms dimeric complexes.</text>
</comment>
<comment type="subcellular location">
    <subcellularLocation>
        <location evidence="1">Cellular thylakoid membrane</location>
        <topology evidence="1">Single-pass membrane protein</topology>
    </subcellularLocation>
</comment>
<comment type="similarity">
    <text evidence="1">Belongs to the PsbE/PsbF family.</text>
</comment>
<dbReference type="EMBL" id="CP001291">
    <property type="protein sequence ID" value="ACK69271.1"/>
    <property type="molecule type" value="Genomic_DNA"/>
</dbReference>
<dbReference type="RefSeq" id="WP_012598218.1">
    <property type="nucleotide sequence ID" value="NC_011729.1"/>
</dbReference>
<dbReference type="SMR" id="B7KH62"/>
<dbReference type="STRING" id="65393.PCC7424_0815"/>
<dbReference type="KEGG" id="cyc:PCC7424_0815"/>
<dbReference type="eggNOG" id="ENOG5032RR6">
    <property type="taxonomic scope" value="Bacteria"/>
</dbReference>
<dbReference type="HOGENOM" id="CLU_194095_0_0_3"/>
<dbReference type="OrthoDB" id="514620at2"/>
<dbReference type="Proteomes" id="UP000002384">
    <property type="component" value="Chromosome"/>
</dbReference>
<dbReference type="GO" id="GO:0009539">
    <property type="term" value="C:photosystem II reaction center"/>
    <property type="evidence" value="ECO:0007669"/>
    <property type="project" value="InterPro"/>
</dbReference>
<dbReference type="GO" id="GO:0031676">
    <property type="term" value="C:plasma membrane-derived thylakoid membrane"/>
    <property type="evidence" value="ECO:0007669"/>
    <property type="project" value="UniProtKB-SubCell"/>
</dbReference>
<dbReference type="GO" id="GO:0009055">
    <property type="term" value="F:electron transfer activity"/>
    <property type="evidence" value="ECO:0007669"/>
    <property type="project" value="UniProtKB-UniRule"/>
</dbReference>
<dbReference type="GO" id="GO:0020037">
    <property type="term" value="F:heme binding"/>
    <property type="evidence" value="ECO:0007669"/>
    <property type="project" value="InterPro"/>
</dbReference>
<dbReference type="GO" id="GO:0005506">
    <property type="term" value="F:iron ion binding"/>
    <property type="evidence" value="ECO:0007669"/>
    <property type="project" value="UniProtKB-UniRule"/>
</dbReference>
<dbReference type="GO" id="GO:0009767">
    <property type="term" value="P:photosynthetic electron transport chain"/>
    <property type="evidence" value="ECO:0007669"/>
    <property type="project" value="InterPro"/>
</dbReference>
<dbReference type="Gene3D" id="1.20.5.860">
    <property type="entry name" value="Photosystem II cytochrome b559, alpha subunit"/>
    <property type="match status" value="1"/>
</dbReference>
<dbReference type="HAMAP" id="MF_00642">
    <property type="entry name" value="PSII_PsbE"/>
    <property type="match status" value="1"/>
</dbReference>
<dbReference type="InterPro" id="IPR006217">
    <property type="entry name" value="PSII_cyt_b559_asu"/>
</dbReference>
<dbReference type="InterPro" id="IPR037025">
    <property type="entry name" value="PSII_cyt_b559_asu_sf"/>
</dbReference>
<dbReference type="InterPro" id="IPR006216">
    <property type="entry name" value="PSII_cyt_b559_CS"/>
</dbReference>
<dbReference type="InterPro" id="IPR013081">
    <property type="entry name" value="PSII_cyt_b559_N"/>
</dbReference>
<dbReference type="InterPro" id="IPR013082">
    <property type="entry name" value="PSII_cytb559_asu_lum"/>
</dbReference>
<dbReference type="NCBIfam" id="TIGR01332">
    <property type="entry name" value="cyt_b559_alpha"/>
    <property type="match status" value="1"/>
</dbReference>
<dbReference type="PANTHER" id="PTHR33391">
    <property type="entry name" value="CYTOCHROME B559 SUBUNIT BETA-RELATED"/>
    <property type="match status" value="1"/>
</dbReference>
<dbReference type="PANTHER" id="PTHR33391:SF9">
    <property type="entry name" value="CYTOCHROME B559 SUBUNIT BETA-RELATED"/>
    <property type="match status" value="1"/>
</dbReference>
<dbReference type="Pfam" id="PF00283">
    <property type="entry name" value="Cytochrom_B559"/>
    <property type="match status" value="1"/>
</dbReference>
<dbReference type="Pfam" id="PF00284">
    <property type="entry name" value="Cytochrom_B559a"/>
    <property type="match status" value="1"/>
</dbReference>
<dbReference type="PIRSF" id="PIRSF000036">
    <property type="entry name" value="PsbE"/>
    <property type="match status" value="1"/>
</dbReference>
<dbReference type="SUPFAM" id="SSF161045">
    <property type="entry name" value="Cytochrome b559 subunits"/>
    <property type="match status" value="1"/>
</dbReference>
<dbReference type="PROSITE" id="PS00537">
    <property type="entry name" value="CYTOCHROME_B559"/>
    <property type="match status" value="1"/>
</dbReference>
<feature type="chain" id="PRO_1000130898" description="Cytochrome b559 subunit alpha">
    <location>
        <begin position="1"/>
        <end position="81"/>
    </location>
</feature>
<feature type="transmembrane region" description="Helical" evidence="1">
    <location>
        <begin position="21"/>
        <end position="35"/>
    </location>
</feature>
<feature type="binding site" description="axial binding residue" evidence="1">
    <location>
        <position position="23"/>
    </location>
    <ligand>
        <name>heme</name>
        <dbReference type="ChEBI" id="CHEBI:30413"/>
        <note>ligand shared with beta subunit</note>
    </ligand>
    <ligandPart>
        <name>Fe</name>
        <dbReference type="ChEBI" id="CHEBI:18248"/>
    </ligandPart>
</feature>
<evidence type="ECO:0000255" key="1">
    <source>
        <dbReference type="HAMAP-Rule" id="MF_00642"/>
    </source>
</evidence>
<organism>
    <name type="scientific">Gloeothece citriformis (strain PCC 7424)</name>
    <name type="common">Cyanothece sp. (strain PCC 7424)</name>
    <dbReference type="NCBI Taxonomy" id="65393"/>
    <lineage>
        <taxon>Bacteria</taxon>
        <taxon>Bacillati</taxon>
        <taxon>Cyanobacteriota</taxon>
        <taxon>Cyanophyceae</taxon>
        <taxon>Oscillatoriophycideae</taxon>
        <taxon>Chroococcales</taxon>
        <taxon>Aphanothecaceae</taxon>
        <taxon>Gloeothece</taxon>
        <taxon>Gloeothece citriformis</taxon>
    </lineage>
</organism>
<name>PSBE_GLOC7</name>
<proteinExistence type="inferred from homology"/>
<accession>B7KH62</accession>
<reference key="1">
    <citation type="journal article" date="2011" name="MBio">
        <title>Novel metabolic attributes of the genus Cyanothece, comprising a group of unicellular nitrogen-fixing Cyanobacteria.</title>
        <authorList>
            <person name="Bandyopadhyay A."/>
            <person name="Elvitigala T."/>
            <person name="Welsh E."/>
            <person name="Stockel J."/>
            <person name="Liberton M."/>
            <person name="Min H."/>
            <person name="Sherman L.A."/>
            <person name="Pakrasi H.B."/>
        </authorList>
    </citation>
    <scope>NUCLEOTIDE SEQUENCE [LARGE SCALE GENOMIC DNA]</scope>
    <source>
        <strain>PCC 7424</strain>
    </source>
</reference>